<dbReference type="EC" id="2.7.1.24" evidence="1"/>
<dbReference type="EMBL" id="AE017196">
    <property type="protein sequence ID" value="AAS13933.1"/>
    <property type="molecule type" value="Genomic_DNA"/>
</dbReference>
<dbReference type="RefSeq" id="WP_006280338.1">
    <property type="nucleotide sequence ID" value="NZ_OX384529.1"/>
</dbReference>
<dbReference type="SMR" id="Q73IH9"/>
<dbReference type="EnsemblBacteria" id="AAS13933">
    <property type="protein sequence ID" value="AAS13933"/>
    <property type="gene ID" value="WD_0185"/>
</dbReference>
<dbReference type="GeneID" id="70035677"/>
<dbReference type="KEGG" id="wol:WD_0185"/>
<dbReference type="eggNOG" id="COG0237">
    <property type="taxonomic scope" value="Bacteria"/>
</dbReference>
<dbReference type="UniPathway" id="UPA00241">
    <property type="reaction ID" value="UER00356"/>
</dbReference>
<dbReference type="Proteomes" id="UP000008215">
    <property type="component" value="Chromosome"/>
</dbReference>
<dbReference type="GO" id="GO:0005737">
    <property type="term" value="C:cytoplasm"/>
    <property type="evidence" value="ECO:0007669"/>
    <property type="project" value="UniProtKB-SubCell"/>
</dbReference>
<dbReference type="GO" id="GO:0005524">
    <property type="term" value="F:ATP binding"/>
    <property type="evidence" value="ECO:0007669"/>
    <property type="project" value="UniProtKB-UniRule"/>
</dbReference>
<dbReference type="GO" id="GO:0004140">
    <property type="term" value="F:dephospho-CoA kinase activity"/>
    <property type="evidence" value="ECO:0007669"/>
    <property type="project" value="UniProtKB-UniRule"/>
</dbReference>
<dbReference type="GO" id="GO:0015937">
    <property type="term" value="P:coenzyme A biosynthetic process"/>
    <property type="evidence" value="ECO:0007669"/>
    <property type="project" value="UniProtKB-UniRule"/>
</dbReference>
<dbReference type="CDD" id="cd02022">
    <property type="entry name" value="DPCK"/>
    <property type="match status" value="1"/>
</dbReference>
<dbReference type="Gene3D" id="3.40.50.300">
    <property type="entry name" value="P-loop containing nucleotide triphosphate hydrolases"/>
    <property type="match status" value="1"/>
</dbReference>
<dbReference type="HAMAP" id="MF_00376">
    <property type="entry name" value="Dephospho_CoA_kinase"/>
    <property type="match status" value="1"/>
</dbReference>
<dbReference type="InterPro" id="IPR001977">
    <property type="entry name" value="Depp_CoAkinase"/>
</dbReference>
<dbReference type="InterPro" id="IPR027417">
    <property type="entry name" value="P-loop_NTPase"/>
</dbReference>
<dbReference type="NCBIfam" id="TIGR00152">
    <property type="entry name" value="dephospho-CoA kinase"/>
    <property type="match status" value="1"/>
</dbReference>
<dbReference type="PANTHER" id="PTHR10695:SF46">
    <property type="entry name" value="BIFUNCTIONAL COENZYME A SYNTHASE-RELATED"/>
    <property type="match status" value="1"/>
</dbReference>
<dbReference type="PANTHER" id="PTHR10695">
    <property type="entry name" value="DEPHOSPHO-COA KINASE-RELATED"/>
    <property type="match status" value="1"/>
</dbReference>
<dbReference type="Pfam" id="PF01121">
    <property type="entry name" value="CoaE"/>
    <property type="match status" value="1"/>
</dbReference>
<dbReference type="SUPFAM" id="SSF52540">
    <property type="entry name" value="P-loop containing nucleoside triphosphate hydrolases"/>
    <property type="match status" value="1"/>
</dbReference>
<dbReference type="PROSITE" id="PS51219">
    <property type="entry name" value="DPCK"/>
    <property type="match status" value="1"/>
</dbReference>
<organism>
    <name type="scientific">Wolbachia pipientis wMel</name>
    <dbReference type="NCBI Taxonomy" id="163164"/>
    <lineage>
        <taxon>Bacteria</taxon>
        <taxon>Pseudomonadati</taxon>
        <taxon>Pseudomonadota</taxon>
        <taxon>Alphaproteobacteria</taxon>
        <taxon>Rickettsiales</taxon>
        <taxon>Anaplasmataceae</taxon>
        <taxon>Wolbachieae</taxon>
        <taxon>Wolbachia</taxon>
    </lineage>
</organism>
<accession>Q73IH9</accession>
<comment type="function">
    <text evidence="1">Catalyzes the phosphorylation of the 3'-hydroxyl group of dephosphocoenzyme A to form coenzyme A.</text>
</comment>
<comment type="catalytic activity">
    <reaction evidence="1">
        <text>3'-dephospho-CoA + ATP = ADP + CoA + H(+)</text>
        <dbReference type="Rhea" id="RHEA:18245"/>
        <dbReference type="ChEBI" id="CHEBI:15378"/>
        <dbReference type="ChEBI" id="CHEBI:30616"/>
        <dbReference type="ChEBI" id="CHEBI:57287"/>
        <dbReference type="ChEBI" id="CHEBI:57328"/>
        <dbReference type="ChEBI" id="CHEBI:456216"/>
        <dbReference type="EC" id="2.7.1.24"/>
    </reaction>
</comment>
<comment type="pathway">
    <text evidence="1">Cofactor biosynthesis; coenzyme A biosynthesis; CoA from (R)-pantothenate: step 5/5.</text>
</comment>
<comment type="subcellular location">
    <subcellularLocation>
        <location evidence="1">Cytoplasm</location>
    </subcellularLocation>
</comment>
<comment type="similarity">
    <text evidence="1">Belongs to the CoaE family.</text>
</comment>
<keyword id="KW-0067">ATP-binding</keyword>
<keyword id="KW-0173">Coenzyme A biosynthesis</keyword>
<keyword id="KW-0963">Cytoplasm</keyword>
<keyword id="KW-0418">Kinase</keyword>
<keyword id="KW-0547">Nucleotide-binding</keyword>
<keyword id="KW-0808">Transferase</keyword>
<gene>
    <name evidence="1" type="primary">coaE</name>
    <name type="ordered locus">WD_0185</name>
</gene>
<feature type="chain" id="PRO_0000173032" description="Dephospho-CoA kinase">
    <location>
        <begin position="1"/>
        <end position="195"/>
    </location>
</feature>
<feature type="domain" description="DPCK" evidence="1">
    <location>
        <begin position="2"/>
        <end position="195"/>
    </location>
</feature>
<feature type="binding site" evidence="1">
    <location>
        <begin position="10"/>
        <end position="15"/>
    </location>
    <ligand>
        <name>ATP</name>
        <dbReference type="ChEBI" id="CHEBI:30616"/>
    </ligand>
</feature>
<reference key="1">
    <citation type="journal article" date="2004" name="PLoS Biol.">
        <title>Phylogenomics of the reproductive parasite Wolbachia pipientis wMel: a streamlined genome overrun by mobile genetic elements.</title>
        <authorList>
            <person name="Wu M."/>
            <person name="Sun L.V."/>
            <person name="Vamathevan J.J."/>
            <person name="Riegler M."/>
            <person name="DeBoy R.T."/>
            <person name="Brownlie J.C."/>
            <person name="McGraw E.A."/>
            <person name="Martin W."/>
            <person name="Esser C."/>
            <person name="Ahmadinejad N."/>
            <person name="Wiegand C."/>
            <person name="Madupu R."/>
            <person name="Beanan M.J."/>
            <person name="Brinkac L.M."/>
            <person name="Daugherty S.C."/>
            <person name="Durkin A.S."/>
            <person name="Kolonay J.F."/>
            <person name="Nelson W.C."/>
            <person name="Mohamoud Y."/>
            <person name="Lee P."/>
            <person name="Berry K.J."/>
            <person name="Young M.B."/>
            <person name="Utterback T.R."/>
            <person name="Weidman J.F."/>
            <person name="Nierman W.C."/>
            <person name="Paulsen I.T."/>
            <person name="Nelson K.E."/>
            <person name="Tettelin H."/>
            <person name="O'Neill S.L."/>
            <person name="Eisen J.A."/>
        </authorList>
    </citation>
    <scope>NUCLEOTIDE SEQUENCE [LARGE SCALE GENOMIC DNA]</scope>
</reference>
<name>COAE_WOLPM</name>
<evidence type="ECO:0000255" key="1">
    <source>
        <dbReference type="HAMAP-Rule" id="MF_00376"/>
    </source>
</evidence>
<protein>
    <recommendedName>
        <fullName evidence="1">Dephospho-CoA kinase</fullName>
        <ecNumber evidence="1">2.7.1.24</ecNumber>
    </recommendedName>
    <alternativeName>
        <fullName evidence="1">Dephosphocoenzyme A kinase</fullName>
    </alternativeName>
</protein>
<sequence>MIISLTGGIGVGKSFVANCFQEFGAVVFDADSVVHQLYKVDKSIISYAEKNFPGVVVNGEIDRTVLSKYFLAYDENWKQFQSLVHSAVLRELEFFIAKEKKIDRKLLVLDVPLLLETKFYLYCDLIVFVHADSVVQAQRLNERNIDKEKLNLISDVQLSIEEKRKMSDFIIDTSVSKEYVFSQVKDIVDSLNLNT</sequence>
<proteinExistence type="inferred from homology"/>